<name>LTACT_BPT4</name>
<dbReference type="EMBL" id="X15818">
    <property type="protein sequence ID" value="CAA33814.1"/>
    <property type="molecule type" value="Genomic_DNA"/>
</dbReference>
<dbReference type="EMBL" id="AF158101">
    <property type="protein sequence ID" value="AAD42456.1"/>
    <property type="molecule type" value="Genomic_DNA"/>
</dbReference>
<dbReference type="PIR" id="S05558">
    <property type="entry name" value="GWBPT4"/>
</dbReference>
<dbReference type="RefSeq" id="NP_049857.1">
    <property type="nucleotide sequence ID" value="NC_000866.4"/>
</dbReference>
<dbReference type="PDB" id="3TBI">
    <property type="method" value="X-ray"/>
    <property type="resolution" value="3.00 A"/>
    <property type="chains" value="A=1-112"/>
</dbReference>
<dbReference type="PDB" id="7D7D">
    <property type="method" value="EM"/>
    <property type="resolution" value="4.50 A"/>
    <property type="chains" value="K=1-112"/>
</dbReference>
<dbReference type="PDBsum" id="3TBI"/>
<dbReference type="PDBsum" id="7D7D"/>
<dbReference type="EMDB" id="EMD-30605"/>
<dbReference type="SMR" id="P13338"/>
<dbReference type="DIP" id="DIP-60377N"/>
<dbReference type="IntAct" id="P13338">
    <property type="interactions" value="1"/>
</dbReference>
<dbReference type="GeneID" id="1258793"/>
<dbReference type="KEGG" id="vg:1258793"/>
<dbReference type="OrthoDB" id="20209at10239"/>
<dbReference type="EvolutionaryTrace" id="P13338"/>
<dbReference type="Proteomes" id="UP000009087">
    <property type="component" value="Segment"/>
</dbReference>
<dbReference type="GO" id="GO:0140537">
    <property type="term" value="F:transcription regulator activator activity"/>
    <property type="evidence" value="ECO:0007669"/>
    <property type="project" value="UniProtKB-UniRule"/>
</dbReference>
<dbReference type="GO" id="GO:0019086">
    <property type="term" value="P:late viral transcription"/>
    <property type="evidence" value="ECO:0007669"/>
    <property type="project" value="UniProtKB-UniRule"/>
</dbReference>
<dbReference type="DisProt" id="DP00898"/>
<dbReference type="Gene3D" id="1.10.10.2850">
    <property type="entry name" value="Phage late-transcription coactivator-like"/>
    <property type="match status" value="1"/>
</dbReference>
<dbReference type="HAMAP" id="MF_04165">
    <property type="entry name" value="T4_TRANSCR_COACT"/>
    <property type="match status" value="1"/>
</dbReference>
<dbReference type="InterPro" id="IPR046384">
    <property type="entry name" value="LTACT_myovirus"/>
</dbReference>
<dbReference type="InterPro" id="IPR031836">
    <property type="entry name" value="Trans_coact"/>
</dbReference>
<dbReference type="InterPro" id="IPR042071">
    <property type="entry name" value="Trans_coact_sf"/>
</dbReference>
<dbReference type="Pfam" id="PF16805">
    <property type="entry name" value="Trans_coact"/>
    <property type="match status" value="1"/>
</dbReference>
<gene>
    <name type="primary">33</name>
</gene>
<organism>
    <name type="scientific">Enterobacteria phage T4</name>
    <name type="common">Bacteriophage T4</name>
    <dbReference type="NCBI Taxonomy" id="10665"/>
    <lineage>
        <taxon>Viruses</taxon>
        <taxon>Duplodnaviria</taxon>
        <taxon>Heunggongvirae</taxon>
        <taxon>Uroviricota</taxon>
        <taxon>Caudoviricetes</taxon>
        <taxon>Straboviridae</taxon>
        <taxon>Tevenvirinae</taxon>
        <taxon>Tequatrovirus</taxon>
    </lineage>
</organism>
<accession>P13338</accession>
<organismHost>
    <name type="scientific">Escherichia coli</name>
    <dbReference type="NCBI Taxonomy" id="562"/>
</organismHost>
<comment type="function">
    <text evidence="1 3 4">Activates transcription at late promoters when the sliding clamp is present (PubMed:33602900). Binds to both the host RNA polymerase (RNAP) and the upstream dsDNA (PubMed:33602900, PubMed:8106327).</text>
</comment>
<comment type="subunit">
    <text evidence="1 2 3">Interacts with the beta subunit of host RNAP RpoB (via flap domain) (PubMed:22135460, PubMed:33602900). Part of the transcription activation complex containing host RNAP, the viral RNA polymerase sigma-like factor, the coactivator gp33, and the sliding clamp (PubMed:33602900).</text>
</comment>
<comment type="interaction">
    <interactant intactId="EBI-15955782">
        <id>P13338</id>
    </interactant>
    <interactant intactId="EBI-544996">
        <id>P0A8V2</id>
        <label>rpoB</label>
    </interactant>
    <organismsDiffer>true</organismsDiffer>
    <experiments>5</experiments>
</comment>
<comment type="domain">
    <text evidence="1 4">The C-terminus is involved in transcriptional enhancement.</text>
</comment>
<comment type="similarity">
    <text evidence="1">Belongs to the Tevenvirinae late transcription coactivator family.</text>
</comment>
<proteinExistence type="evidence at protein level"/>
<keyword id="KW-0002">3D-structure</keyword>
<keyword id="KW-1185">Reference proteome</keyword>
<evidence type="ECO:0000255" key="1">
    <source>
        <dbReference type="HAMAP-Rule" id="MF_04165"/>
    </source>
</evidence>
<evidence type="ECO:0000269" key="2">
    <source>
    </source>
</evidence>
<evidence type="ECO:0000269" key="3">
    <source>
    </source>
</evidence>
<evidence type="ECO:0000269" key="4">
    <source>
    </source>
</evidence>
<evidence type="ECO:0000303" key="5">
    <source>
    </source>
</evidence>
<evidence type="ECO:0007744" key="6">
    <source>
        <dbReference type="PDB" id="3TBI"/>
    </source>
</evidence>
<evidence type="ECO:0007744" key="7">
    <source>
        <dbReference type="PDB" id="7D7D"/>
    </source>
</evidence>
<evidence type="ECO:0007829" key="8">
    <source>
        <dbReference type="PDB" id="3TBI"/>
    </source>
</evidence>
<reference key="1">
    <citation type="journal article" date="1989" name="Nucleic Acids Res.">
        <title>Organization of the bacteriophage T4 genome between map positions 150.745 and 145.824.</title>
        <authorList>
            <person name="Hahn S."/>
            <person name="Rueger W."/>
        </authorList>
    </citation>
    <scope>NUCLEOTIDE SEQUENCE [GENOMIC DNA]</scope>
    <source>
        <strain>BK536</strain>
    </source>
</reference>
<reference key="2">
    <citation type="journal article" date="2003" name="Microbiol. Mol. Biol. Rev.">
        <title>Bacteriophage T4 genome.</title>
        <authorList>
            <person name="Miller E.S."/>
            <person name="Kutter E."/>
            <person name="Mosig G."/>
            <person name="Arisaka F."/>
            <person name="Kunisawa T."/>
            <person name="Ruger W."/>
        </authorList>
    </citation>
    <scope>NUCLEOTIDE SEQUENCE [LARGE SCALE GENOMIC DNA]</scope>
</reference>
<reference key="3">
    <citation type="journal article" date="1994" name="J. Bacteriol.">
        <title>Molecular genetic analysis of a prokaryotic transcriptional coactivator: functional domains of the bacteriophage T4 gene 33 protein.</title>
        <authorList>
            <person name="Winkelman J.W."/>
            <person name="Kassavetis G.A."/>
            <person name="Geiduschek E.P."/>
        </authorList>
    </citation>
    <scope>DOMAIN</scope>
    <scope>INTERACTION WITH HOST RNAP</scope>
    <scope>FUNCTION</scope>
</reference>
<reference evidence="6" key="4">
    <citation type="journal article" date="2011" name="Proc. Natl. Acad. Sci. U.S.A.">
        <title>Crystal structure of the bacteriophage T4 late-transcription coactivator gp33 with the beta-subunit flap domain of Escherichia coli RNA polymerase.</title>
        <authorList>
            <person name="Twist K.A."/>
            <person name="Campbell E.A."/>
            <person name="Deighan P."/>
            <person name="Nechaev S."/>
            <person name="Jain V."/>
            <person name="Geiduschek E.P."/>
            <person name="Hochschild A."/>
            <person name="Darst S.A."/>
        </authorList>
    </citation>
    <scope>X-RAY CRYSTALLOGRAPHY (3.00 ANGSTROMS)</scope>
    <scope>INTERACTION WITH HOST RPOB</scope>
</reference>
<reference evidence="7" key="5">
    <citation type="journal article" date="2021" name="Nat. Commun.">
        <title>Transcription activation by a sliding clamp.</title>
        <authorList>
            <person name="Shi J."/>
            <person name="Wen A."/>
            <person name="Jin S."/>
            <person name="Gao B."/>
            <person name="Huang Y."/>
            <person name="Feng Y."/>
        </authorList>
    </citation>
    <scope>STRUCTURE BY ELECTRON MICROSCOPY (4.50 ANGSTROMS)</scope>
    <scope>IDENTIFICATION IN THE TRANSCRIPTION ACTIVATION COMPLEX</scope>
    <scope>INTERACTION WITH HOST RNAP</scope>
    <scope>FUNCTION</scope>
</reference>
<sequence length="112" mass="12831">MTQFSLNDIRPVDETGLSEKELSIKKEKDEIAKLLDRQENGFIIEKMVEEFGMSYLEATTAFLEENSIPETQFAKFIPSGIIEKIQSEAIDENLLRPSVVRCEKTNTLDFLL</sequence>
<protein>
    <recommendedName>
        <fullName evidence="1 5">Late transcription coactivator</fullName>
    </recommendedName>
    <alternativeName>
        <fullName>Gene product 33</fullName>
        <shortName>gp33</shortName>
    </alternativeName>
    <alternativeName>
        <fullName evidence="1">RNA polymerase-associated protein Gp33</fullName>
    </alternativeName>
</protein>
<feature type="chain" id="PRO_0000165019" description="Late transcription coactivator">
    <location>
        <begin position="1"/>
        <end position="112"/>
    </location>
</feature>
<feature type="region of interest" description="Interaction with host RNAP" evidence="1 4">
    <location>
        <begin position="62"/>
        <end position="92"/>
    </location>
</feature>
<feature type="region of interest" description="Involved in transcriptional enhancement" evidence="1 4">
    <location>
        <begin position="106"/>
        <end position="112"/>
    </location>
</feature>
<feature type="helix" evidence="8">
    <location>
        <begin position="37"/>
        <end position="50"/>
    </location>
</feature>
<feature type="helix" evidence="8">
    <location>
        <begin position="55"/>
        <end position="65"/>
    </location>
</feature>
<feature type="helix" evidence="8">
    <location>
        <begin position="70"/>
        <end position="72"/>
    </location>
</feature>
<feature type="helix" evidence="8">
    <location>
        <begin position="73"/>
        <end position="76"/>
    </location>
</feature>
<feature type="helix" evidence="8">
    <location>
        <begin position="79"/>
        <end position="92"/>
    </location>
</feature>
<feature type="helix" evidence="8">
    <location>
        <begin position="97"/>
        <end position="101"/>
    </location>
</feature>